<organism>
    <name type="scientific">Lepus europaeus</name>
    <name type="common">European hare</name>
    <dbReference type="NCBI Taxonomy" id="9983"/>
    <lineage>
        <taxon>Eukaryota</taxon>
        <taxon>Metazoa</taxon>
        <taxon>Chordata</taxon>
        <taxon>Craniata</taxon>
        <taxon>Vertebrata</taxon>
        <taxon>Euteleostomi</taxon>
        <taxon>Mammalia</taxon>
        <taxon>Eutheria</taxon>
        <taxon>Euarchontoglires</taxon>
        <taxon>Glires</taxon>
        <taxon>Lagomorpha</taxon>
        <taxon>Leporidae</taxon>
        <taxon>Lepus</taxon>
    </lineage>
</organism>
<sequence length="379" mass="42768">MTNIRKTHPLLKIVNHSLIDLPAPSNISAWWNFGSLLGLCLMIQILTGLFLAMHYTSDTATAFSSVTHICRDVNYGWLIRYLHANGASMFFICLYMHVGRGIYYGSYTYLETWNIGIILLFAVMATAFMGYVLPWGQMSFWGATVITNLLSAIPYIGTTLVEWIWGGFSVDKATLTRFFAFHFILPFIIAALVMIHLLFLHETGSNNPSGIPSNSDKIPFHPYYTIKDALGFLMLILLLMLLVLFSPDLLGDPDNYTPANPLNTPPHIKPEWYFLFAYAILRSIPNKLGGVLALVMSILILAIIPFLHMSKQRSMMFRPISQVLFWILVADLLTLTWIGGQPVEHPFITIGQVASILYFSIILILMPLASLVENKILKW</sequence>
<proteinExistence type="inferred from homology"/>
<comment type="function">
    <text evidence="2">Component of the ubiquinol-cytochrome c reductase complex (complex III or cytochrome b-c1 complex) that is part of the mitochondrial respiratory chain. The b-c1 complex mediates electron transfer from ubiquinol to cytochrome c. Contributes to the generation of a proton gradient across the mitochondrial membrane that is then used for ATP synthesis.</text>
</comment>
<comment type="cofactor">
    <cofactor evidence="2">
        <name>heme b</name>
        <dbReference type="ChEBI" id="CHEBI:60344"/>
    </cofactor>
    <text evidence="2">Binds 2 heme b groups non-covalently.</text>
</comment>
<comment type="subunit">
    <text evidence="2">The cytochrome bc1 complex contains 11 subunits: 3 respiratory subunits (MT-CYB, CYC1 and UQCRFS1), 2 core proteins (UQCRC1 and UQCRC2) and 6 low-molecular weight proteins (UQCRH/QCR6, UQCRB/QCR7, UQCRQ/QCR8, UQCR10/QCR9, UQCR11/QCR10 and a cleavage product of UQCRFS1). This cytochrome bc1 complex then forms a dimer.</text>
</comment>
<comment type="subcellular location">
    <subcellularLocation>
        <location evidence="2">Mitochondrion inner membrane</location>
        <topology evidence="2">Multi-pass membrane protein</topology>
    </subcellularLocation>
</comment>
<comment type="miscellaneous">
    <text evidence="1">Heme 1 (or BL or b562) is low-potential and absorbs at about 562 nm, and heme 2 (or BH or b566) is high-potential and absorbs at about 566 nm.</text>
</comment>
<comment type="similarity">
    <text evidence="3 4">Belongs to the cytochrome b family.</text>
</comment>
<comment type="caution">
    <text evidence="2">The full-length protein contains only eight transmembrane helices, not nine as predicted by bioinformatics tools.</text>
</comment>
<reference key="1">
    <citation type="journal article" date="2002" name="Proc. Natl. Acad. Sci. U.S.A.">
        <title>Mammalian mitogenomic relationships and the root of the eutherian tree.</title>
        <authorList>
            <person name="Arnason U."/>
            <person name="Adegoke J.A."/>
            <person name="Bodin K."/>
            <person name="Born E.W."/>
            <person name="Esa Y.B."/>
            <person name="Gullberg A."/>
            <person name="Nilsson M."/>
            <person name="Short R.V."/>
            <person name="Xu X."/>
            <person name="Janke A."/>
        </authorList>
    </citation>
    <scope>NUCLEOTIDE SEQUENCE [GENOMIC DNA]</scope>
    <source>
        <tissue>Liver</tissue>
    </source>
</reference>
<reference key="2">
    <citation type="submission" date="1997-06" db="EMBL/GenBank/DDBJ databases">
        <title>Cytochrome b phylogeny of North American hares and jackrabbits (Lepus, Lagomorpha) and the effects of mutational saturation in outgroup taxa.</title>
        <authorList>
            <person name="Halanych K.M."/>
            <person name="Demboski J.R."/>
            <person name="van Vuuren B.J."/>
            <person name="Klein D.R."/>
            <person name="Cook J.A."/>
        </authorList>
    </citation>
    <scope>NUCLEOTIDE SEQUENCE [GENOMIC DNA] OF 1-234</scope>
    <source>
        <strain>Isolate AF 21115</strain>
        <strain>Isolate AF 21116</strain>
    </source>
</reference>
<evidence type="ECO:0000250" key="1"/>
<evidence type="ECO:0000250" key="2">
    <source>
        <dbReference type="UniProtKB" id="P00157"/>
    </source>
</evidence>
<evidence type="ECO:0000255" key="3">
    <source>
        <dbReference type="PROSITE-ProRule" id="PRU00967"/>
    </source>
</evidence>
<evidence type="ECO:0000255" key="4">
    <source>
        <dbReference type="PROSITE-ProRule" id="PRU00968"/>
    </source>
</evidence>
<protein>
    <recommendedName>
        <fullName>Cytochrome b</fullName>
    </recommendedName>
    <alternativeName>
        <fullName>Complex III subunit 3</fullName>
    </alternativeName>
    <alternativeName>
        <fullName>Complex III subunit III</fullName>
    </alternativeName>
    <alternativeName>
        <fullName>Cytochrome b-c1 complex subunit 3</fullName>
    </alternativeName>
    <alternativeName>
        <fullName>Ubiquinol-cytochrome-c reductase complex cytochrome b subunit</fullName>
    </alternativeName>
</protein>
<feature type="chain" id="PRO_0000061105" description="Cytochrome b">
    <location>
        <begin position="1"/>
        <end position="379"/>
    </location>
</feature>
<feature type="transmembrane region" description="Helical" evidence="2">
    <location>
        <begin position="33"/>
        <end position="53"/>
    </location>
</feature>
<feature type="transmembrane region" description="Helical" evidence="2">
    <location>
        <begin position="77"/>
        <end position="98"/>
    </location>
</feature>
<feature type="transmembrane region" description="Helical" evidence="2">
    <location>
        <begin position="113"/>
        <end position="133"/>
    </location>
</feature>
<feature type="transmembrane region" description="Helical" evidence="2">
    <location>
        <begin position="178"/>
        <end position="198"/>
    </location>
</feature>
<feature type="transmembrane region" description="Helical" evidence="2">
    <location>
        <begin position="226"/>
        <end position="246"/>
    </location>
</feature>
<feature type="transmembrane region" description="Helical" evidence="2">
    <location>
        <begin position="288"/>
        <end position="308"/>
    </location>
</feature>
<feature type="transmembrane region" description="Helical" evidence="2">
    <location>
        <begin position="320"/>
        <end position="340"/>
    </location>
</feature>
<feature type="transmembrane region" description="Helical" evidence="2">
    <location>
        <begin position="347"/>
        <end position="367"/>
    </location>
</feature>
<feature type="binding site" description="axial binding residue" evidence="2">
    <location>
        <position position="83"/>
    </location>
    <ligand>
        <name>heme b</name>
        <dbReference type="ChEBI" id="CHEBI:60344"/>
        <label>b562</label>
    </ligand>
    <ligandPart>
        <name>Fe</name>
        <dbReference type="ChEBI" id="CHEBI:18248"/>
    </ligandPart>
</feature>
<feature type="binding site" description="axial binding residue" evidence="2">
    <location>
        <position position="97"/>
    </location>
    <ligand>
        <name>heme b</name>
        <dbReference type="ChEBI" id="CHEBI:60344"/>
        <label>b566</label>
    </ligand>
    <ligandPart>
        <name>Fe</name>
        <dbReference type="ChEBI" id="CHEBI:18248"/>
    </ligandPart>
</feature>
<feature type="binding site" description="axial binding residue" evidence="2">
    <location>
        <position position="182"/>
    </location>
    <ligand>
        <name>heme b</name>
        <dbReference type="ChEBI" id="CHEBI:60344"/>
        <label>b562</label>
    </ligand>
    <ligandPart>
        <name>Fe</name>
        <dbReference type="ChEBI" id="CHEBI:18248"/>
    </ligandPart>
</feature>
<feature type="binding site" description="axial binding residue" evidence="2">
    <location>
        <position position="196"/>
    </location>
    <ligand>
        <name>heme b</name>
        <dbReference type="ChEBI" id="CHEBI:60344"/>
        <label>b566</label>
    </ligand>
    <ligandPart>
        <name>Fe</name>
        <dbReference type="ChEBI" id="CHEBI:18248"/>
    </ligandPart>
</feature>
<feature type="binding site" evidence="2">
    <location>
        <position position="201"/>
    </location>
    <ligand>
        <name>a ubiquinone</name>
        <dbReference type="ChEBI" id="CHEBI:16389"/>
    </ligand>
</feature>
<feature type="sequence variant" description="In strain: Isolate AF 21115.">
    <original>A</original>
    <variation>T</variation>
    <location>
        <position position="23"/>
    </location>
</feature>
<feature type="sequence variant" description="In strain: Isolate AF 21116.">
    <original>N</original>
    <variation>D</variation>
    <location>
        <position position="214"/>
    </location>
</feature>
<name>CYB_LEPEU</name>
<dbReference type="EMBL" id="AJ421471">
    <property type="protein sequence ID" value="CAD13293.2"/>
    <property type="molecule type" value="Genomic_DNA"/>
</dbReference>
<dbReference type="EMBL" id="AF010161">
    <property type="protein sequence ID" value="AAB94501.1"/>
    <property type="molecule type" value="Genomic_DNA"/>
</dbReference>
<dbReference type="EMBL" id="AF010162">
    <property type="protein sequence ID" value="AAB94502.1"/>
    <property type="molecule type" value="Genomic_DNA"/>
</dbReference>
<dbReference type="RefSeq" id="NP_659337.1">
    <property type="nucleotide sequence ID" value="NC_004028.1"/>
</dbReference>
<dbReference type="SMR" id="O47561"/>
<dbReference type="GeneID" id="805147"/>
<dbReference type="CTD" id="4519"/>
<dbReference type="GO" id="GO:0005743">
    <property type="term" value="C:mitochondrial inner membrane"/>
    <property type="evidence" value="ECO:0007669"/>
    <property type="project" value="UniProtKB-SubCell"/>
</dbReference>
<dbReference type="GO" id="GO:0045275">
    <property type="term" value="C:respiratory chain complex III"/>
    <property type="evidence" value="ECO:0007669"/>
    <property type="project" value="InterPro"/>
</dbReference>
<dbReference type="GO" id="GO:0046872">
    <property type="term" value="F:metal ion binding"/>
    <property type="evidence" value="ECO:0007669"/>
    <property type="project" value="UniProtKB-KW"/>
</dbReference>
<dbReference type="GO" id="GO:0008121">
    <property type="term" value="F:ubiquinol-cytochrome-c reductase activity"/>
    <property type="evidence" value="ECO:0007669"/>
    <property type="project" value="InterPro"/>
</dbReference>
<dbReference type="GO" id="GO:0006122">
    <property type="term" value="P:mitochondrial electron transport, ubiquinol to cytochrome c"/>
    <property type="evidence" value="ECO:0007669"/>
    <property type="project" value="TreeGrafter"/>
</dbReference>
<dbReference type="CDD" id="cd00290">
    <property type="entry name" value="cytochrome_b_C"/>
    <property type="match status" value="1"/>
</dbReference>
<dbReference type="CDD" id="cd00284">
    <property type="entry name" value="Cytochrome_b_N"/>
    <property type="match status" value="1"/>
</dbReference>
<dbReference type="FunFam" id="1.20.810.10:FF:000002">
    <property type="entry name" value="Cytochrome b"/>
    <property type="match status" value="1"/>
</dbReference>
<dbReference type="Gene3D" id="1.20.810.10">
    <property type="entry name" value="Cytochrome Bc1 Complex, Chain C"/>
    <property type="match status" value="1"/>
</dbReference>
<dbReference type="InterPro" id="IPR005798">
    <property type="entry name" value="Cyt_b/b6_C"/>
</dbReference>
<dbReference type="InterPro" id="IPR036150">
    <property type="entry name" value="Cyt_b/b6_C_sf"/>
</dbReference>
<dbReference type="InterPro" id="IPR005797">
    <property type="entry name" value="Cyt_b/b6_N"/>
</dbReference>
<dbReference type="InterPro" id="IPR027387">
    <property type="entry name" value="Cytb/b6-like_sf"/>
</dbReference>
<dbReference type="InterPro" id="IPR030689">
    <property type="entry name" value="Cytochrome_b"/>
</dbReference>
<dbReference type="InterPro" id="IPR048260">
    <property type="entry name" value="Cytochrome_b_C_euk/bac"/>
</dbReference>
<dbReference type="InterPro" id="IPR048259">
    <property type="entry name" value="Cytochrome_b_N_euk/bac"/>
</dbReference>
<dbReference type="InterPro" id="IPR016174">
    <property type="entry name" value="Di-haem_cyt_TM"/>
</dbReference>
<dbReference type="PANTHER" id="PTHR19271">
    <property type="entry name" value="CYTOCHROME B"/>
    <property type="match status" value="1"/>
</dbReference>
<dbReference type="PANTHER" id="PTHR19271:SF16">
    <property type="entry name" value="CYTOCHROME B"/>
    <property type="match status" value="1"/>
</dbReference>
<dbReference type="Pfam" id="PF00032">
    <property type="entry name" value="Cytochrom_B_C"/>
    <property type="match status" value="1"/>
</dbReference>
<dbReference type="Pfam" id="PF00033">
    <property type="entry name" value="Cytochrome_B"/>
    <property type="match status" value="1"/>
</dbReference>
<dbReference type="PIRSF" id="PIRSF038885">
    <property type="entry name" value="COB"/>
    <property type="match status" value="1"/>
</dbReference>
<dbReference type="SUPFAM" id="SSF81648">
    <property type="entry name" value="a domain/subunit of cytochrome bc1 complex (Ubiquinol-cytochrome c reductase)"/>
    <property type="match status" value="1"/>
</dbReference>
<dbReference type="SUPFAM" id="SSF81342">
    <property type="entry name" value="Transmembrane di-heme cytochromes"/>
    <property type="match status" value="1"/>
</dbReference>
<dbReference type="PROSITE" id="PS51003">
    <property type="entry name" value="CYTB_CTER"/>
    <property type="match status" value="1"/>
</dbReference>
<dbReference type="PROSITE" id="PS51002">
    <property type="entry name" value="CYTB_NTER"/>
    <property type="match status" value="1"/>
</dbReference>
<gene>
    <name type="primary">MT-CYB</name>
    <name type="synonym">COB</name>
    <name type="synonym">CYTB</name>
    <name type="synonym">MTCYB</name>
</gene>
<geneLocation type="mitochondrion"/>
<accession>O47561</accession>
<accession>O47562</accession>
<accession>Q8LWW4</accession>
<keyword id="KW-0249">Electron transport</keyword>
<keyword id="KW-0349">Heme</keyword>
<keyword id="KW-0408">Iron</keyword>
<keyword id="KW-0472">Membrane</keyword>
<keyword id="KW-0479">Metal-binding</keyword>
<keyword id="KW-0496">Mitochondrion</keyword>
<keyword id="KW-0999">Mitochondrion inner membrane</keyword>
<keyword id="KW-0679">Respiratory chain</keyword>
<keyword id="KW-0812">Transmembrane</keyword>
<keyword id="KW-1133">Transmembrane helix</keyword>
<keyword id="KW-0813">Transport</keyword>
<keyword id="KW-0830">Ubiquinone</keyword>